<reference key="1">
    <citation type="journal article" date="1997" name="Nature">
        <title>Genomic sequence of a Lyme disease spirochaete, Borrelia burgdorferi.</title>
        <authorList>
            <person name="Fraser C.M."/>
            <person name="Casjens S."/>
            <person name="Huang W.M."/>
            <person name="Sutton G.G."/>
            <person name="Clayton R.A."/>
            <person name="Lathigra R."/>
            <person name="White O."/>
            <person name="Ketchum K.A."/>
            <person name="Dodson R.J."/>
            <person name="Hickey E.K."/>
            <person name="Gwinn M.L."/>
            <person name="Dougherty B.A."/>
            <person name="Tomb J.-F."/>
            <person name="Fleischmann R.D."/>
            <person name="Richardson D.L."/>
            <person name="Peterson J.D."/>
            <person name="Kerlavage A.R."/>
            <person name="Quackenbush J."/>
            <person name="Salzberg S.L."/>
            <person name="Hanson M."/>
            <person name="van Vugt R."/>
            <person name="Palmer N."/>
            <person name="Adams M.D."/>
            <person name="Gocayne J.D."/>
            <person name="Weidman J.F."/>
            <person name="Utterback T.R."/>
            <person name="Watthey L."/>
            <person name="McDonald L.A."/>
            <person name="Artiach P."/>
            <person name="Bowman C."/>
            <person name="Garland S.A."/>
            <person name="Fujii C."/>
            <person name="Cotton M.D."/>
            <person name="Horst K."/>
            <person name="Roberts K.M."/>
            <person name="Hatch B."/>
            <person name="Smith H.O."/>
            <person name="Venter J.C."/>
        </authorList>
    </citation>
    <scope>NUCLEOTIDE SEQUENCE [LARGE SCALE GENOMIC DNA]</scope>
    <source>
        <strain>ATCC 35210 / DSM 4680 / CIP 102532 / B31</strain>
    </source>
</reference>
<dbReference type="EMBL" id="AE000783">
    <property type="protein sequence ID" value="AAC67041.1"/>
    <property type="molecule type" value="Genomic_DNA"/>
</dbReference>
<dbReference type="PIR" id="G70187">
    <property type="entry name" value="G70187"/>
</dbReference>
<dbReference type="RefSeq" id="NP_212838.1">
    <property type="nucleotide sequence ID" value="NC_001318.1"/>
</dbReference>
<dbReference type="RefSeq" id="WP_002656801.1">
    <property type="nucleotide sequence ID" value="NC_001318.1"/>
</dbReference>
<dbReference type="PDB" id="2KWL">
    <property type="method" value="NMR"/>
    <property type="chains" value="A=1-80"/>
</dbReference>
<dbReference type="PDBsum" id="2KWL"/>
<dbReference type="BMRB" id="O51647"/>
<dbReference type="SMR" id="O51647"/>
<dbReference type="STRING" id="224326.BB_0704"/>
<dbReference type="PaxDb" id="224326-BB_0704"/>
<dbReference type="EnsemblBacteria" id="AAC67041">
    <property type="protein sequence ID" value="AAC67041"/>
    <property type="gene ID" value="BB_0704"/>
</dbReference>
<dbReference type="GeneID" id="56567513"/>
<dbReference type="KEGG" id="bbu:BB_0704"/>
<dbReference type="PATRIC" id="fig|224326.49.peg.1095"/>
<dbReference type="HOGENOM" id="CLU_108696_5_6_12"/>
<dbReference type="OrthoDB" id="9804551at2"/>
<dbReference type="UniPathway" id="UPA00094"/>
<dbReference type="EvolutionaryTrace" id="O51647"/>
<dbReference type="Proteomes" id="UP000001807">
    <property type="component" value="Chromosome"/>
</dbReference>
<dbReference type="GO" id="GO:0005829">
    <property type="term" value="C:cytosol"/>
    <property type="evidence" value="ECO:0007669"/>
    <property type="project" value="TreeGrafter"/>
</dbReference>
<dbReference type="GO" id="GO:0016020">
    <property type="term" value="C:membrane"/>
    <property type="evidence" value="ECO:0007669"/>
    <property type="project" value="GOC"/>
</dbReference>
<dbReference type="GO" id="GO:0000035">
    <property type="term" value="F:acyl binding"/>
    <property type="evidence" value="ECO:0007669"/>
    <property type="project" value="TreeGrafter"/>
</dbReference>
<dbReference type="GO" id="GO:0000036">
    <property type="term" value="F:acyl carrier activity"/>
    <property type="evidence" value="ECO:0007669"/>
    <property type="project" value="UniProtKB-UniRule"/>
</dbReference>
<dbReference type="GO" id="GO:0009245">
    <property type="term" value="P:lipid A biosynthetic process"/>
    <property type="evidence" value="ECO:0007669"/>
    <property type="project" value="TreeGrafter"/>
</dbReference>
<dbReference type="Gene3D" id="1.10.1200.10">
    <property type="entry name" value="ACP-like"/>
    <property type="match status" value="1"/>
</dbReference>
<dbReference type="HAMAP" id="MF_01217">
    <property type="entry name" value="Acyl_carrier"/>
    <property type="match status" value="1"/>
</dbReference>
<dbReference type="InterPro" id="IPR003231">
    <property type="entry name" value="ACP"/>
</dbReference>
<dbReference type="InterPro" id="IPR036736">
    <property type="entry name" value="ACP-like_sf"/>
</dbReference>
<dbReference type="InterPro" id="IPR009081">
    <property type="entry name" value="PP-bd_ACP"/>
</dbReference>
<dbReference type="NCBIfam" id="TIGR00517">
    <property type="entry name" value="acyl_carrier"/>
    <property type="match status" value="1"/>
</dbReference>
<dbReference type="NCBIfam" id="NF002148">
    <property type="entry name" value="PRK00982.1-2"/>
    <property type="match status" value="1"/>
</dbReference>
<dbReference type="NCBIfam" id="NF002150">
    <property type="entry name" value="PRK00982.1-4"/>
    <property type="match status" value="1"/>
</dbReference>
<dbReference type="PANTHER" id="PTHR20863">
    <property type="entry name" value="ACYL CARRIER PROTEIN"/>
    <property type="match status" value="1"/>
</dbReference>
<dbReference type="PANTHER" id="PTHR20863:SF76">
    <property type="entry name" value="CARRIER DOMAIN-CONTAINING PROTEIN"/>
    <property type="match status" value="1"/>
</dbReference>
<dbReference type="Pfam" id="PF00550">
    <property type="entry name" value="PP-binding"/>
    <property type="match status" value="1"/>
</dbReference>
<dbReference type="SUPFAM" id="SSF47336">
    <property type="entry name" value="ACP-like"/>
    <property type="match status" value="1"/>
</dbReference>
<dbReference type="PROSITE" id="PS50075">
    <property type="entry name" value="CARRIER"/>
    <property type="match status" value="1"/>
</dbReference>
<gene>
    <name evidence="1" type="primary">acpP</name>
    <name type="ordered locus">BB_0704</name>
</gene>
<evidence type="ECO:0000255" key="1">
    <source>
        <dbReference type="HAMAP-Rule" id="MF_01217"/>
    </source>
</evidence>
<evidence type="ECO:0000255" key="2">
    <source>
        <dbReference type="PROSITE-ProRule" id="PRU00258"/>
    </source>
</evidence>
<evidence type="ECO:0007829" key="3">
    <source>
        <dbReference type="PDB" id="2KWL"/>
    </source>
</evidence>
<protein>
    <recommendedName>
        <fullName evidence="1">Acyl carrier protein</fullName>
        <shortName evidence="1">ACP</shortName>
    </recommendedName>
</protein>
<keyword id="KW-0002">3D-structure</keyword>
<keyword id="KW-0963">Cytoplasm</keyword>
<keyword id="KW-0275">Fatty acid biosynthesis</keyword>
<keyword id="KW-0276">Fatty acid metabolism</keyword>
<keyword id="KW-0444">Lipid biosynthesis</keyword>
<keyword id="KW-0443">Lipid metabolism</keyword>
<keyword id="KW-0596">Phosphopantetheine</keyword>
<keyword id="KW-0597">Phosphoprotein</keyword>
<keyword id="KW-1185">Reference proteome</keyword>
<proteinExistence type="evidence at protein level"/>
<feature type="chain" id="PRO_0000180110" description="Acyl carrier protein">
    <location>
        <begin position="1"/>
        <end position="80"/>
    </location>
</feature>
<feature type="domain" description="Carrier" evidence="2">
    <location>
        <begin position="4"/>
        <end position="79"/>
    </location>
</feature>
<feature type="modified residue" description="O-(pantetheine 4'-phosphoryl)serine" evidence="2">
    <location>
        <position position="39"/>
    </location>
</feature>
<feature type="helix" evidence="3">
    <location>
        <begin position="3"/>
        <end position="18"/>
    </location>
</feature>
<feature type="helix" evidence="3">
    <location>
        <begin position="22"/>
        <end position="24"/>
    </location>
</feature>
<feature type="turn" evidence="3">
    <location>
        <begin position="27"/>
        <end position="29"/>
    </location>
</feature>
<feature type="helix" evidence="3">
    <location>
        <begin position="30"/>
        <end position="33"/>
    </location>
</feature>
<feature type="strand" evidence="3">
    <location>
        <begin position="35"/>
        <end position="37"/>
    </location>
</feature>
<feature type="helix" evidence="3">
    <location>
        <begin position="39"/>
        <end position="53"/>
    </location>
</feature>
<feature type="turn" evidence="3">
    <location>
        <begin position="57"/>
        <end position="60"/>
    </location>
</feature>
<feature type="helix" evidence="3">
    <location>
        <begin position="61"/>
        <end position="64"/>
    </location>
</feature>
<feature type="helix" evidence="3">
    <location>
        <begin position="68"/>
        <end position="79"/>
    </location>
</feature>
<comment type="function">
    <text evidence="1">Carrier of the growing fatty acid chain in fatty acid biosynthesis.</text>
</comment>
<comment type="pathway">
    <text evidence="1">Lipid metabolism; fatty acid biosynthesis.</text>
</comment>
<comment type="subcellular location">
    <subcellularLocation>
        <location evidence="1">Cytoplasm</location>
    </subcellularLocation>
</comment>
<comment type="PTM">
    <text evidence="1">4'-phosphopantetheine is transferred from CoA to a specific serine of apo-ACP by AcpS. This modification is essential for activity because fatty acids are bound in thioester linkage to the sulfhydryl of the prosthetic group.</text>
</comment>
<comment type="similarity">
    <text evidence="1">Belongs to the acyl carrier protein (ACP) family.</text>
</comment>
<accession>O51647</accession>
<name>ACP_BORBU</name>
<organism>
    <name type="scientific">Borreliella burgdorferi (strain ATCC 35210 / DSM 4680 / CIP 102532 / B31)</name>
    <name type="common">Borrelia burgdorferi</name>
    <dbReference type="NCBI Taxonomy" id="224326"/>
    <lineage>
        <taxon>Bacteria</taxon>
        <taxon>Pseudomonadati</taxon>
        <taxon>Spirochaetota</taxon>
        <taxon>Spirochaetia</taxon>
        <taxon>Spirochaetales</taxon>
        <taxon>Borreliaceae</taxon>
        <taxon>Borreliella</taxon>
    </lineage>
</organism>
<sequence>MDNDEIFSKVRSIISEQLDKKEDEITTDSRFVEDLNADSLDIYELLYLLEEAFDDKIPENEANEFETVGDVVNFIKKRKG</sequence>